<sequence length="334" mass="35215">MEQTTLLRLAGAGLTALAGALALGPVVIPLMRRLRAGQTIRAEMSARHQAKAGTPTMGGVIFIIPAILATLIFAPRSGDALPRLIIALVLTVGHGLVGFADDYIKVVLKRSLGLRARDKLLAQVGLAAVLGYGAVEVLGLGTAVTLPVLNLTLELGRPLYYLLVLIMVWGTASAVNFADGLDGLLGGLSVITFSFYGLVVALALGQTDMAVLGTALVGGVLGFLHYNRHPARIFMGDVGSFALGGALAALAVLTKTEFLLVIVGAVYVIEVISVILQVLSFRLTGRRIFKMAPLHHHFELLGWSEGQVLRLFWGAGLLFTLLGWLVLPGMLAGR</sequence>
<name>MRAY_SYMTH</name>
<keyword id="KW-0131">Cell cycle</keyword>
<keyword id="KW-0132">Cell division</keyword>
<keyword id="KW-1003">Cell membrane</keyword>
<keyword id="KW-0133">Cell shape</keyword>
<keyword id="KW-0961">Cell wall biogenesis/degradation</keyword>
<keyword id="KW-0460">Magnesium</keyword>
<keyword id="KW-0472">Membrane</keyword>
<keyword id="KW-0479">Metal-binding</keyword>
<keyword id="KW-0573">Peptidoglycan synthesis</keyword>
<keyword id="KW-1185">Reference proteome</keyword>
<keyword id="KW-0808">Transferase</keyword>
<keyword id="KW-0812">Transmembrane</keyword>
<keyword id="KW-1133">Transmembrane helix</keyword>
<proteinExistence type="inferred from homology"/>
<gene>
    <name evidence="1" type="primary">mraY</name>
    <name type="ordered locus">STH1208</name>
</gene>
<reference key="1">
    <citation type="journal article" date="2004" name="Nucleic Acids Res.">
        <title>Genome sequence of Symbiobacterium thermophilum, an uncultivable bacterium that depends on microbial commensalism.</title>
        <authorList>
            <person name="Ueda K."/>
            <person name="Yamashita A."/>
            <person name="Ishikawa J."/>
            <person name="Shimada M."/>
            <person name="Watsuji T."/>
            <person name="Morimura K."/>
            <person name="Ikeda H."/>
            <person name="Hattori M."/>
            <person name="Beppu T."/>
        </authorList>
    </citation>
    <scope>NUCLEOTIDE SEQUENCE [LARGE SCALE GENOMIC DNA]</scope>
    <source>
        <strain>DSM 24528 / JCM 14929 / IAM 14863 / T</strain>
    </source>
</reference>
<feature type="chain" id="PRO_0000108912" description="Phospho-N-acetylmuramoyl-pentapeptide-transferase">
    <location>
        <begin position="1"/>
        <end position="334"/>
    </location>
</feature>
<feature type="transmembrane region" description="Helical" evidence="1">
    <location>
        <begin position="11"/>
        <end position="31"/>
    </location>
</feature>
<feature type="transmembrane region" description="Helical" evidence="1">
    <location>
        <begin position="55"/>
        <end position="75"/>
    </location>
</feature>
<feature type="transmembrane region" description="Helical" evidence="1">
    <location>
        <begin position="84"/>
        <end position="104"/>
    </location>
</feature>
<feature type="transmembrane region" description="Helical" evidence="1">
    <location>
        <begin position="124"/>
        <end position="144"/>
    </location>
</feature>
<feature type="transmembrane region" description="Helical" evidence="1">
    <location>
        <begin position="158"/>
        <end position="178"/>
    </location>
</feature>
<feature type="transmembrane region" description="Helical" evidence="1">
    <location>
        <begin position="184"/>
        <end position="204"/>
    </location>
</feature>
<feature type="transmembrane region" description="Helical" evidence="1">
    <location>
        <begin position="205"/>
        <end position="225"/>
    </location>
</feature>
<feature type="transmembrane region" description="Helical" evidence="1">
    <location>
        <begin position="233"/>
        <end position="253"/>
    </location>
</feature>
<feature type="transmembrane region" description="Helical" evidence="1">
    <location>
        <begin position="258"/>
        <end position="278"/>
    </location>
</feature>
<feature type="transmembrane region" description="Helical" evidence="1">
    <location>
        <begin position="311"/>
        <end position="331"/>
    </location>
</feature>
<evidence type="ECO:0000255" key="1">
    <source>
        <dbReference type="HAMAP-Rule" id="MF_00038"/>
    </source>
</evidence>
<protein>
    <recommendedName>
        <fullName evidence="1">Phospho-N-acetylmuramoyl-pentapeptide-transferase</fullName>
        <ecNumber evidence="1">2.7.8.13</ecNumber>
    </recommendedName>
    <alternativeName>
        <fullName evidence="1">UDP-MurNAc-pentapeptide phosphotransferase</fullName>
    </alternativeName>
</protein>
<comment type="function">
    <text evidence="1">Catalyzes the initial step of the lipid cycle reactions in the biosynthesis of the cell wall peptidoglycan: transfers peptidoglycan precursor phospho-MurNAc-pentapeptide from UDP-MurNAc-pentapeptide onto the lipid carrier undecaprenyl phosphate, yielding undecaprenyl-pyrophosphoryl-MurNAc-pentapeptide, known as lipid I.</text>
</comment>
<comment type="catalytic activity">
    <reaction evidence="1">
        <text>UDP-N-acetyl-alpha-D-muramoyl-L-alanyl-gamma-D-glutamyl-meso-2,6-diaminopimeloyl-D-alanyl-D-alanine + di-trans,octa-cis-undecaprenyl phosphate = di-trans,octa-cis-undecaprenyl diphospho-N-acetyl-alpha-D-muramoyl-L-alanyl-D-glutamyl-meso-2,6-diaminopimeloyl-D-alanyl-D-alanine + UMP</text>
        <dbReference type="Rhea" id="RHEA:28386"/>
        <dbReference type="ChEBI" id="CHEBI:57865"/>
        <dbReference type="ChEBI" id="CHEBI:60392"/>
        <dbReference type="ChEBI" id="CHEBI:61386"/>
        <dbReference type="ChEBI" id="CHEBI:61387"/>
        <dbReference type="EC" id="2.7.8.13"/>
    </reaction>
</comment>
<comment type="cofactor">
    <cofactor evidence="1">
        <name>Mg(2+)</name>
        <dbReference type="ChEBI" id="CHEBI:18420"/>
    </cofactor>
</comment>
<comment type="pathway">
    <text evidence="1">Cell wall biogenesis; peptidoglycan biosynthesis.</text>
</comment>
<comment type="subcellular location">
    <subcellularLocation>
        <location evidence="1">Cell membrane</location>
        <topology evidence="1">Multi-pass membrane protein</topology>
    </subcellularLocation>
</comment>
<comment type="similarity">
    <text evidence="1">Belongs to the glycosyltransferase 4 family. MraY subfamily.</text>
</comment>
<organism>
    <name type="scientific">Symbiobacterium thermophilum (strain DSM 24528 / JCM 14929 / IAM 14863 / T)</name>
    <dbReference type="NCBI Taxonomy" id="292459"/>
    <lineage>
        <taxon>Bacteria</taxon>
        <taxon>Bacillati</taxon>
        <taxon>Bacillota</taxon>
        <taxon>Clostridia</taxon>
        <taxon>Eubacteriales</taxon>
        <taxon>Symbiobacteriaceae</taxon>
        <taxon>Symbiobacterium</taxon>
    </lineage>
</organism>
<dbReference type="EC" id="2.7.8.13" evidence="1"/>
<dbReference type="EMBL" id="AP006840">
    <property type="protein sequence ID" value="BAD40193.1"/>
    <property type="molecule type" value="Genomic_DNA"/>
</dbReference>
<dbReference type="RefSeq" id="WP_011195339.1">
    <property type="nucleotide sequence ID" value="NC_006177.1"/>
</dbReference>
<dbReference type="SMR" id="Q67Q50"/>
<dbReference type="STRING" id="292459.STH1208"/>
<dbReference type="KEGG" id="sth:STH1208"/>
<dbReference type="eggNOG" id="COG0472">
    <property type="taxonomic scope" value="Bacteria"/>
</dbReference>
<dbReference type="HOGENOM" id="CLU_023982_0_1_9"/>
<dbReference type="OrthoDB" id="9805475at2"/>
<dbReference type="UniPathway" id="UPA00219"/>
<dbReference type="Proteomes" id="UP000000417">
    <property type="component" value="Chromosome"/>
</dbReference>
<dbReference type="GO" id="GO:0005886">
    <property type="term" value="C:plasma membrane"/>
    <property type="evidence" value="ECO:0007669"/>
    <property type="project" value="UniProtKB-SubCell"/>
</dbReference>
<dbReference type="GO" id="GO:0046872">
    <property type="term" value="F:metal ion binding"/>
    <property type="evidence" value="ECO:0007669"/>
    <property type="project" value="UniProtKB-KW"/>
</dbReference>
<dbReference type="GO" id="GO:0008963">
    <property type="term" value="F:phospho-N-acetylmuramoyl-pentapeptide-transferase activity"/>
    <property type="evidence" value="ECO:0007669"/>
    <property type="project" value="UniProtKB-UniRule"/>
</dbReference>
<dbReference type="GO" id="GO:0051992">
    <property type="term" value="F:UDP-N-acetylmuramoyl-L-alanyl-D-glutamyl-meso-2,6-diaminopimelyl-D-alanyl-D-alanine:undecaprenyl-phosphate transferase activity"/>
    <property type="evidence" value="ECO:0007669"/>
    <property type="project" value="RHEA"/>
</dbReference>
<dbReference type="GO" id="GO:0051301">
    <property type="term" value="P:cell division"/>
    <property type="evidence" value="ECO:0007669"/>
    <property type="project" value="UniProtKB-KW"/>
</dbReference>
<dbReference type="GO" id="GO:0071555">
    <property type="term" value="P:cell wall organization"/>
    <property type="evidence" value="ECO:0007669"/>
    <property type="project" value="UniProtKB-KW"/>
</dbReference>
<dbReference type="GO" id="GO:0009252">
    <property type="term" value="P:peptidoglycan biosynthetic process"/>
    <property type="evidence" value="ECO:0007669"/>
    <property type="project" value="UniProtKB-UniRule"/>
</dbReference>
<dbReference type="GO" id="GO:0008360">
    <property type="term" value="P:regulation of cell shape"/>
    <property type="evidence" value="ECO:0007669"/>
    <property type="project" value="UniProtKB-KW"/>
</dbReference>
<dbReference type="CDD" id="cd06852">
    <property type="entry name" value="GT_MraY"/>
    <property type="match status" value="1"/>
</dbReference>
<dbReference type="HAMAP" id="MF_00038">
    <property type="entry name" value="MraY"/>
    <property type="match status" value="1"/>
</dbReference>
<dbReference type="InterPro" id="IPR000715">
    <property type="entry name" value="Glycosyl_transferase_4"/>
</dbReference>
<dbReference type="InterPro" id="IPR003524">
    <property type="entry name" value="PNAcMuramoyl-5peptid_Trfase"/>
</dbReference>
<dbReference type="InterPro" id="IPR018480">
    <property type="entry name" value="PNAcMuramoyl-5peptid_Trfase_CS"/>
</dbReference>
<dbReference type="NCBIfam" id="TIGR00445">
    <property type="entry name" value="mraY"/>
    <property type="match status" value="1"/>
</dbReference>
<dbReference type="PANTHER" id="PTHR22926">
    <property type="entry name" value="PHOSPHO-N-ACETYLMURAMOYL-PENTAPEPTIDE-TRANSFERASE"/>
    <property type="match status" value="1"/>
</dbReference>
<dbReference type="PANTHER" id="PTHR22926:SF5">
    <property type="entry name" value="PHOSPHO-N-ACETYLMURAMOYL-PENTAPEPTIDE-TRANSFERASE HOMOLOG"/>
    <property type="match status" value="1"/>
</dbReference>
<dbReference type="Pfam" id="PF00953">
    <property type="entry name" value="Glycos_transf_4"/>
    <property type="match status" value="1"/>
</dbReference>
<dbReference type="Pfam" id="PF10555">
    <property type="entry name" value="MraY_sig1"/>
    <property type="match status" value="1"/>
</dbReference>
<dbReference type="PROSITE" id="PS01347">
    <property type="entry name" value="MRAY_1"/>
    <property type="match status" value="1"/>
</dbReference>
<dbReference type="PROSITE" id="PS01348">
    <property type="entry name" value="MRAY_2"/>
    <property type="match status" value="1"/>
</dbReference>
<accession>Q67Q50</accession>